<gene>
    <name type="primary">PRM1</name>
</gene>
<comment type="function">
    <text evidence="1">Protamines substitute for histones in the chromatin of sperm during the haploid phase of spermatogenesis. They compact sperm DNA into a highly condensed, stable and inactive complex (By similarity).</text>
</comment>
<comment type="subcellular location">
    <subcellularLocation>
        <location evidence="1">Nucleus</location>
    </subcellularLocation>
    <subcellularLocation>
        <location evidence="1">Chromosome</location>
    </subcellularLocation>
</comment>
<comment type="tissue specificity">
    <text>Testis.</text>
</comment>
<comment type="similarity">
    <text evidence="2">Belongs to the protamine P1 family.</text>
</comment>
<proteinExistence type="evidence at transcript level"/>
<protein>
    <recommendedName>
        <fullName>Sperm protamine P1</fullName>
    </recommendedName>
</protein>
<reference key="1">
    <citation type="journal article" date="2002" name="Mol. Phylogenet. Evol.">
        <title>Characterization and phylogenetic utility of the mammalian protamine P1 gene.</title>
        <authorList>
            <person name="Van Den Bussche R.A."/>
            <person name="Hoofer S.R."/>
            <person name="Hansen E.W."/>
        </authorList>
    </citation>
    <scope>NUCLEOTIDE SEQUENCE [GENOMIC DNA]</scope>
</reference>
<evidence type="ECO:0000250" key="1"/>
<evidence type="ECO:0000305" key="2"/>
<keyword id="KW-0158">Chromosome</keyword>
<keyword id="KW-0217">Developmental protein</keyword>
<keyword id="KW-0221">Differentiation</keyword>
<keyword id="KW-0226">DNA condensation</keyword>
<keyword id="KW-0238">DNA-binding</keyword>
<keyword id="KW-0544">Nucleosome core</keyword>
<keyword id="KW-0539">Nucleus</keyword>
<keyword id="KW-0744">Spermatogenesis</keyword>
<name>HSP1_HYPSA</name>
<dbReference type="EMBL" id="AF435945">
    <property type="protein sequence ID" value="AAL35579.1"/>
    <property type="molecule type" value="Genomic_DNA"/>
</dbReference>
<dbReference type="GO" id="GO:0000786">
    <property type="term" value="C:nucleosome"/>
    <property type="evidence" value="ECO:0007669"/>
    <property type="project" value="UniProtKB-KW"/>
</dbReference>
<dbReference type="GO" id="GO:0005634">
    <property type="term" value="C:nucleus"/>
    <property type="evidence" value="ECO:0007669"/>
    <property type="project" value="UniProtKB-SubCell"/>
</dbReference>
<dbReference type="GO" id="GO:0003677">
    <property type="term" value="F:DNA binding"/>
    <property type="evidence" value="ECO:0007669"/>
    <property type="project" value="UniProtKB-KW"/>
</dbReference>
<dbReference type="GO" id="GO:0030154">
    <property type="term" value="P:cell differentiation"/>
    <property type="evidence" value="ECO:0007669"/>
    <property type="project" value="UniProtKB-KW"/>
</dbReference>
<dbReference type="GO" id="GO:0030261">
    <property type="term" value="P:chromosome condensation"/>
    <property type="evidence" value="ECO:0007669"/>
    <property type="project" value="UniProtKB-KW"/>
</dbReference>
<dbReference type="GO" id="GO:0007283">
    <property type="term" value="P:spermatogenesis"/>
    <property type="evidence" value="ECO:0007669"/>
    <property type="project" value="UniProtKB-KW"/>
</dbReference>
<sequence>MARYRRCRSRSRCRRRRRRCHRRRRRCCRRRRRRRACCRRYRCRRR</sequence>
<organism>
    <name type="scientific">Hypsugo savii</name>
    <name type="common">Savi's pipistrelle</name>
    <name type="synonym">Pipistrellus savii</name>
    <dbReference type="NCBI Taxonomy" id="109485"/>
    <lineage>
        <taxon>Eukaryota</taxon>
        <taxon>Metazoa</taxon>
        <taxon>Chordata</taxon>
        <taxon>Craniata</taxon>
        <taxon>Vertebrata</taxon>
        <taxon>Euteleostomi</taxon>
        <taxon>Mammalia</taxon>
        <taxon>Eutheria</taxon>
        <taxon>Laurasiatheria</taxon>
        <taxon>Chiroptera</taxon>
        <taxon>Yangochiroptera</taxon>
        <taxon>Vespertilionidae</taxon>
        <taxon>Hypsugo</taxon>
    </lineage>
</organism>
<accession>Q7JH04</accession>
<feature type="chain" id="PRO_0000191532" description="Sperm protamine P1">
    <location>
        <begin position="1"/>
        <end position="46"/>
    </location>
</feature>